<accession>Q9FLD5</accession>
<reference key="1">
    <citation type="journal article" date="1998" name="DNA Res.">
        <title>Structural analysis of Arabidopsis thaliana chromosome 5. IV. Sequence features of the regions of 1,456,315 bp covered by nineteen physically assigned P1 and TAC clones.</title>
        <authorList>
            <person name="Sato S."/>
            <person name="Kaneko T."/>
            <person name="Kotani H."/>
            <person name="Nakamura Y."/>
            <person name="Asamizu E."/>
            <person name="Miyajima N."/>
            <person name="Tabata S."/>
        </authorList>
    </citation>
    <scope>NUCLEOTIDE SEQUENCE [LARGE SCALE GENOMIC DNA]</scope>
    <source>
        <strain>cv. Columbia</strain>
    </source>
</reference>
<reference key="2">
    <citation type="journal article" date="2017" name="Plant J.">
        <title>Araport11: a complete reannotation of the Arabidopsis thaliana reference genome.</title>
        <authorList>
            <person name="Cheng C.Y."/>
            <person name="Krishnakumar V."/>
            <person name="Chan A.P."/>
            <person name="Thibaud-Nissen F."/>
            <person name="Schobel S."/>
            <person name="Town C.D."/>
        </authorList>
    </citation>
    <scope>GENOME REANNOTATION</scope>
    <source>
        <strain>cv. Columbia</strain>
    </source>
</reference>
<reference key="3">
    <citation type="journal article" date="2011" name="Mol. Cells">
        <title>Activation of a mitochondrial ATPase gene induces abnormal seed development in Arabidopsis.</title>
        <authorList>
            <person name="Baek K."/>
            <person name="Seo P.J."/>
            <person name="Park C.-M."/>
        </authorList>
    </citation>
    <scope>FUNCTION</scope>
    <scope>MUTAGENESIS OF LYS-256</scope>
    <scope>TISSUE SPECIFICITY</scope>
    <scope>DEVELOPMENTAL STAGE</scope>
    <scope>INDUCTION BY ABIOTIC STRESSES</scope>
    <scope>SUBCELLULAR LOCATION</scope>
    <scope>COFACTOR</scope>
    <source>
        <strain>cv. Columbia</strain>
    </source>
</reference>
<keyword id="KW-0067">ATP-binding</keyword>
<keyword id="KW-0378">Hydrolase</keyword>
<keyword id="KW-0460">Magnesium</keyword>
<keyword id="KW-0472">Membrane</keyword>
<keyword id="KW-0496">Mitochondrion</keyword>
<keyword id="KW-0547">Nucleotide-binding</keyword>
<keyword id="KW-1185">Reference proteome</keyword>
<keyword id="KW-0812">Transmembrane</keyword>
<keyword id="KW-1133">Transmembrane helix</keyword>
<name>ASD_ARATH</name>
<proteinExistence type="evidence at protein level"/>
<feature type="chain" id="PRO_0000434701" description="AAA-ATPase ASD, mitochondrial">
    <location>
        <begin position="1"/>
        <end position="514"/>
    </location>
</feature>
<feature type="transmembrane region" description="Helical" evidence="1">
    <location>
        <begin position="7"/>
        <end position="24"/>
    </location>
</feature>
<feature type="region of interest" description="Disordered" evidence="2">
    <location>
        <begin position="311"/>
        <end position="342"/>
    </location>
</feature>
<feature type="region of interest" description="Disordered" evidence="2">
    <location>
        <begin position="467"/>
        <end position="514"/>
    </location>
</feature>
<feature type="compositionally biased region" description="Basic and acidic residues" evidence="2">
    <location>
        <begin position="331"/>
        <end position="342"/>
    </location>
</feature>
<feature type="compositionally biased region" description="Basic and acidic residues" evidence="2">
    <location>
        <begin position="467"/>
        <end position="502"/>
    </location>
</feature>
<feature type="binding site" evidence="1">
    <location>
        <begin position="250"/>
        <end position="257"/>
    </location>
    <ligand>
        <name>ATP</name>
        <dbReference type="ChEBI" id="CHEBI:30616"/>
    </ligand>
</feature>
<feature type="mutagenesis site" description="Impaired ATPase activity." evidence="3">
    <original>K</original>
    <variation>A</variation>
    <variation>R</variation>
    <location>
        <position position="256"/>
    </location>
</feature>
<comment type="function">
    <text evidence="3">Required to regulate morphology and anatomy during seed maturation.</text>
</comment>
<comment type="catalytic activity">
    <reaction evidence="3">
        <text>ATP + H2O = ADP + phosphate + H(+)</text>
        <dbReference type="Rhea" id="RHEA:13065"/>
        <dbReference type="ChEBI" id="CHEBI:15377"/>
        <dbReference type="ChEBI" id="CHEBI:15378"/>
        <dbReference type="ChEBI" id="CHEBI:30616"/>
        <dbReference type="ChEBI" id="CHEBI:43474"/>
        <dbReference type="ChEBI" id="CHEBI:456216"/>
    </reaction>
</comment>
<comment type="cofactor">
    <cofactor evidence="3">
        <name>Mg(2+)</name>
        <dbReference type="ChEBI" id="CHEBI:18420"/>
    </cofactor>
</comment>
<comment type="subcellular location">
    <subcellularLocation>
        <location evidence="3">Mitochondrion membrane</location>
        <topology evidence="1">Single-pass membrane protein</topology>
    </subcellularLocation>
</comment>
<comment type="tissue specificity">
    <text evidence="3">Expressed in seeds, specifically in the embryo.</text>
</comment>
<comment type="developmental stage">
    <text evidence="3">Accumulates gradually in the embryo during the seed development to reach high levels in mature seeds, but repressed rapidly in germinating seeds.</text>
</comment>
<comment type="induction">
    <text evidence="3">Induced by abscisic acid (ABA) and abiotic stresses, such as drought, cold, and salt stresses, in an abscisic acid (ABA)- dependent manner.</text>
</comment>
<comment type="similarity">
    <text evidence="5">Belongs to the AAA ATPase family. BCS1 subfamily.</text>
</comment>
<dbReference type="EC" id="3.6.1.-" evidence="3"/>
<dbReference type="EMBL" id="AB010077">
    <property type="protein sequence ID" value="BAB10225.1"/>
    <property type="molecule type" value="Genomic_DNA"/>
</dbReference>
<dbReference type="EMBL" id="CP002688">
    <property type="protein sequence ID" value="AED94501.1"/>
    <property type="molecule type" value="Genomic_DNA"/>
</dbReference>
<dbReference type="RefSeq" id="NP_198817.1">
    <property type="nucleotide sequence ID" value="NM_123364.2"/>
</dbReference>
<dbReference type="SMR" id="Q9FLD5"/>
<dbReference type="FunCoup" id="Q9FLD5">
    <property type="interactions" value="1545"/>
</dbReference>
<dbReference type="STRING" id="3702.Q9FLD5"/>
<dbReference type="TCDB" id="3.A.28.1.3">
    <property type="family name" value="the aaa-atpase, bcs1 (bcs1) family"/>
</dbReference>
<dbReference type="iPTMnet" id="Q9FLD5"/>
<dbReference type="PaxDb" id="3702-AT5G40010.1"/>
<dbReference type="ProteomicsDB" id="246945"/>
<dbReference type="EnsemblPlants" id="AT5G40010.1">
    <property type="protein sequence ID" value="AT5G40010.1"/>
    <property type="gene ID" value="AT5G40010"/>
</dbReference>
<dbReference type="GeneID" id="833998"/>
<dbReference type="Gramene" id="AT5G40010.1">
    <property type="protein sequence ID" value="AT5G40010.1"/>
    <property type="gene ID" value="AT5G40010"/>
</dbReference>
<dbReference type="KEGG" id="ath:AT5G40010"/>
<dbReference type="Araport" id="AT5G40010"/>
<dbReference type="TAIR" id="AT5G40010">
    <property type="gene designation" value="AATP1"/>
</dbReference>
<dbReference type="eggNOG" id="KOG0743">
    <property type="taxonomic scope" value="Eukaryota"/>
</dbReference>
<dbReference type="HOGENOM" id="CLU_010189_0_1_1"/>
<dbReference type="InParanoid" id="Q9FLD5"/>
<dbReference type="OMA" id="GEVWTNT"/>
<dbReference type="PhylomeDB" id="Q9FLD5"/>
<dbReference type="PRO" id="PR:Q9FLD5"/>
<dbReference type="Proteomes" id="UP000006548">
    <property type="component" value="Chromosome 5"/>
</dbReference>
<dbReference type="ExpressionAtlas" id="Q9FLD5">
    <property type="expression patterns" value="baseline and differential"/>
</dbReference>
<dbReference type="GO" id="GO:0005783">
    <property type="term" value="C:endoplasmic reticulum"/>
    <property type="evidence" value="ECO:0007005"/>
    <property type="project" value="TAIR"/>
</dbReference>
<dbReference type="GO" id="GO:0031966">
    <property type="term" value="C:mitochondrial membrane"/>
    <property type="evidence" value="ECO:0007669"/>
    <property type="project" value="UniProtKB-SubCell"/>
</dbReference>
<dbReference type="GO" id="GO:0005739">
    <property type="term" value="C:mitochondrion"/>
    <property type="evidence" value="ECO:0000314"/>
    <property type="project" value="TAIR"/>
</dbReference>
<dbReference type="GO" id="GO:0005524">
    <property type="term" value="F:ATP binding"/>
    <property type="evidence" value="ECO:0007669"/>
    <property type="project" value="UniProtKB-KW"/>
</dbReference>
<dbReference type="GO" id="GO:0016887">
    <property type="term" value="F:ATP hydrolysis activity"/>
    <property type="evidence" value="ECO:0000314"/>
    <property type="project" value="TAIR"/>
</dbReference>
<dbReference type="GO" id="GO:0010154">
    <property type="term" value="P:fruit development"/>
    <property type="evidence" value="ECO:0000315"/>
    <property type="project" value="TAIR"/>
</dbReference>
<dbReference type="GO" id="GO:0009737">
    <property type="term" value="P:response to abscisic acid"/>
    <property type="evidence" value="ECO:0000270"/>
    <property type="project" value="UniProtKB"/>
</dbReference>
<dbReference type="GO" id="GO:0009409">
    <property type="term" value="P:response to cold"/>
    <property type="evidence" value="ECO:0000270"/>
    <property type="project" value="UniProtKB"/>
</dbReference>
<dbReference type="GO" id="GO:0009651">
    <property type="term" value="P:response to salt stress"/>
    <property type="evidence" value="ECO:0000270"/>
    <property type="project" value="UniProtKB"/>
</dbReference>
<dbReference type="GO" id="GO:0009414">
    <property type="term" value="P:response to water deprivation"/>
    <property type="evidence" value="ECO:0000270"/>
    <property type="project" value="UniProtKB"/>
</dbReference>
<dbReference type="GO" id="GO:0010431">
    <property type="term" value="P:seed maturation"/>
    <property type="evidence" value="ECO:0000315"/>
    <property type="project" value="TAIR"/>
</dbReference>
<dbReference type="CDD" id="cd19510">
    <property type="entry name" value="RecA-like_BCS1"/>
    <property type="match status" value="1"/>
</dbReference>
<dbReference type="FunFam" id="3.40.50.300:FF:001122">
    <property type="entry name" value="AAA-ATPase ASD, mitochondrial"/>
    <property type="match status" value="1"/>
</dbReference>
<dbReference type="Gene3D" id="6.10.280.40">
    <property type="match status" value="1"/>
</dbReference>
<dbReference type="Gene3D" id="3.40.50.300">
    <property type="entry name" value="P-loop containing nucleotide triphosphate hydrolases"/>
    <property type="match status" value="1"/>
</dbReference>
<dbReference type="InterPro" id="IPR003593">
    <property type="entry name" value="AAA+_ATPase"/>
</dbReference>
<dbReference type="InterPro" id="IPR025753">
    <property type="entry name" value="AAA_N_dom"/>
</dbReference>
<dbReference type="InterPro" id="IPR003959">
    <property type="entry name" value="ATPase_AAA_core"/>
</dbReference>
<dbReference type="InterPro" id="IPR003960">
    <property type="entry name" value="ATPase_AAA_CS"/>
</dbReference>
<dbReference type="InterPro" id="IPR050747">
    <property type="entry name" value="Mitochondrial_chaperone_BCS1"/>
</dbReference>
<dbReference type="InterPro" id="IPR027417">
    <property type="entry name" value="P-loop_NTPase"/>
</dbReference>
<dbReference type="PANTHER" id="PTHR23070">
    <property type="entry name" value="BCS1 AAA-TYPE ATPASE"/>
    <property type="match status" value="1"/>
</dbReference>
<dbReference type="Pfam" id="PF00004">
    <property type="entry name" value="AAA"/>
    <property type="match status" value="1"/>
</dbReference>
<dbReference type="Pfam" id="PF14363">
    <property type="entry name" value="AAA_assoc"/>
    <property type="match status" value="1"/>
</dbReference>
<dbReference type="SMART" id="SM00382">
    <property type="entry name" value="AAA"/>
    <property type="match status" value="1"/>
</dbReference>
<dbReference type="SUPFAM" id="SSF52540">
    <property type="entry name" value="P-loop containing nucleoside triphosphate hydrolases"/>
    <property type="match status" value="1"/>
</dbReference>
<dbReference type="PROSITE" id="PS00674">
    <property type="entry name" value="AAA"/>
    <property type="match status" value="1"/>
</dbReference>
<organism evidence="8">
    <name type="scientific">Arabidopsis thaliana</name>
    <name type="common">Mouse-ear cress</name>
    <dbReference type="NCBI Taxonomy" id="3702"/>
    <lineage>
        <taxon>Eukaryota</taxon>
        <taxon>Viridiplantae</taxon>
        <taxon>Streptophyta</taxon>
        <taxon>Embryophyta</taxon>
        <taxon>Tracheophyta</taxon>
        <taxon>Spermatophyta</taxon>
        <taxon>Magnoliopsida</taxon>
        <taxon>eudicotyledons</taxon>
        <taxon>Gunneridae</taxon>
        <taxon>Pentapetalae</taxon>
        <taxon>rosids</taxon>
        <taxon>malvids</taxon>
        <taxon>Brassicales</taxon>
        <taxon>Brassicaceae</taxon>
        <taxon>Camelineae</taxon>
        <taxon>Arabidopsis</taxon>
    </lineage>
</organism>
<protein>
    <recommendedName>
        <fullName>AAA-ATPase ASD, mitochondrial</fullName>
        <ecNumber evidence="3">3.6.1.-</ecNumber>
    </recommendedName>
    <alternativeName>
        <fullName>AAA-ATPase 1</fullName>
    </alternativeName>
    <alternativeName>
        <fullName evidence="4">Protein ATPASE-IN-SEED-DEVELOPMENT</fullName>
    </alternativeName>
</protein>
<evidence type="ECO:0000255" key="1"/>
<evidence type="ECO:0000256" key="2">
    <source>
        <dbReference type="SAM" id="MobiDB-lite"/>
    </source>
</evidence>
<evidence type="ECO:0000269" key="3">
    <source>
    </source>
</evidence>
<evidence type="ECO:0000303" key="4">
    <source>
    </source>
</evidence>
<evidence type="ECO:0000305" key="5"/>
<evidence type="ECO:0000312" key="6">
    <source>
        <dbReference type="EMBL" id="AED94501.1"/>
    </source>
</evidence>
<evidence type="ECO:0000312" key="7">
    <source>
        <dbReference type="EMBL" id="BAB10225.1"/>
    </source>
</evidence>
<evidence type="ECO:0000312" key="8">
    <source>
        <dbReference type="Proteomes" id="UP000006548"/>
    </source>
</evidence>
<sequence length="514" mass="60348">MVKMGEVWTNTGSALASLVFIYTIFERFFPYRLREHFEPLAQSLIGFIYPYIQITFHEYSGERFKRSDVYDAIQSYLSKDSSSRAKKLTANTIKGNKSIILSMDDHEEITDEFQGVKVWWQSKKHQSESRAISFYPKADESRFYMLKFHRRDREVITKKYLNHVISEGKTIEVKNRERKLYSNNPSQNWSGYKQTKWSHVTFEHPATFDTLAMEYKKKEEIKNDLIKFSNSKDYYKKIGKAWKRGYLLFGPPGTGKSTMIAAMANLLEYDVYDLELTTVKDNTELRRLLIETSGKSIIVIEDIDCSLDLTGQRKQKKDEEEDEDETSPIEKQMKKDQGENKGSKVTLSGLLNFIDGLWSACGGERIIVFTTNFIDKLDPALIRKGRMDKHIEMSYCGFEAFKVLANNYLDAKEEDDNELFDEIKRLLEVEEIKMTPADVGENLLKKSEVETKEICLKRLIEALKEEKEEAKRRIEDEEKKKKEEEEIKRKKREEKKIKKEEKEEKEENETTMKD</sequence>
<gene>
    <name type="primary">AATP1</name>
    <name evidence="4" type="synonym">ASD</name>
    <name evidence="6" type="ordered locus">At5g40010</name>
    <name evidence="7" type="ORF">MYH19.21</name>
</gene>